<reference key="1">
    <citation type="submission" date="2005-09" db="EMBL/GenBank/DDBJ databases">
        <title>Annotation of the Aspergillus terreus NIH2624 genome.</title>
        <authorList>
            <person name="Birren B.W."/>
            <person name="Lander E.S."/>
            <person name="Galagan J.E."/>
            <person name="Nusbaum C."/>
            <person name="Devon K."/>
            <person name="Henn M."/>
            <person name="Ma L.-J."/>
            <person name="Jaffe D.B."/>
            <person name="Butler J."/>
            <person name="Alvarez P."/>
            <person name="Gnerre S."/>
            <person name="Grabherr M."/>
            <person name="Kleber M."/>
            <person name="Mauceli E.W."/>
            <person name="Brockman W."/>
            <person name="Rounsley S."/>
            <person name="Young S.K."/>
            <person name="LaButti K."/>
            <person name="Pushparaj V."/>
            <person name="DeCaprio D."/>
            <person name="Crawford M."/>
            <person name="Koehrsen M."/>
            <person name="Engels R."/>
            <person name="Montgomery P."/>
            <person name="Pearson M."/>
            <person name="Howarth C."/>
            <person name="Larson L."/>
            <person name="Luoma S."/>
            <person name="White J."/>
            <person name="Alvarado L."/>
            <person name="Kodira C.D."/>
            <person name="Zeng Q."/>
            <person name="Oleary S."/>
            <person name="Yandava C."/>
            <person name="Denning D.W."/>
            <person name="Nierman W.C."/>
            <person name="Milne T."/>
            <person name="Madden K."/>
        </authorList>
    </citation>
    <scope>NUCLEOTIDE SEQUENCE [LARGE SCALE GENOMIC DNA]</scope>
    <source>
        <strain>NIH 2624 / FGSC A1156</strain>
    </source>
</reference>
<organism>
    <name type="scientific">Aspergillus terreus (strain NIH 2624 / FGSC A1156)</name>
    <dbReference type="NCBI Taxonomy" id="341663"/>
    <lineage>
        <taxon>Eukaryota</taxon>
        <taxon>Fungi</taxon>
        <taxon>Dikarya</taxon>
        <taxon>Ascomycota</taxon>
        <taxon>Pezizomycotina</taxon>
        <taxon>Eurotiomycetes</taxon>
        <taxon>Eurotiomycetidae</taxon>
        <taxon>Eurotiales</taxon>
        <taxon>Aspergillaceae</taxon>
        <taxon>Aspergillus</taxon>
        <taxon>Aspergillus subgen. Circumdati</taxon>
    </lineage>
</organism>
<proteinExistence type="inferred from homology"/>
<accession>Q0CVW0</accession>
<name>MZM1_ASPTN</name>
<protein>
    <recommendedName>
        <fullName>Mitochondrial zinc maintenance protein 1, mitochondrial</fullName>
    </recommendedName>
</protein>
<gene>
    <name type="primary">MZM1</name>
    <name type="ORF">ATEG_02174</name>
</gene>
<sequence>MASSVPSARSAYRQLLRATRIAFRDDIRVLIAARQEARRNFDSHRRQGIDTPMQINHAIEVANILRHNIVQGVRESEDEAARWELRIHDEIERGDNDSIKVGGKSVKVDKPCSA</sequence>
<keyword id="KW-0143">Chaperone</keyword>
<keyword id="KW-0496">Mitochondrion</keyword>
<keyword id="KW-1185">Reference proteome</keyword>
<keyword id="KW-0809">Transit peptide</keyword>
<feature type="transit peptide" description="Mitochondrion" evidence="2">
    <location>
        <begin position="1"/>
        <end position="75"/>
    </location>
</feature>
<feature type="chain" id="PRO_0000405486" description="Mitochondrial zinc maintenance protein 1, mitochondrial">
    <location>
        <begin position="76"/>
        <end position="114"/>
    </location>
</feature>
<feature type="region of interest" description="Disordered" evidence="3">
    <location>
        <begin position="95"/>
        <end position="114"/>
    </location>
</feature>
<comment type="function">
    <text evidence="1">Assembly factor required for Rieske Fe-S protein RIP1 incorporation into the cytochrome b-c1 (CIII) complex. Functions as a chaperone, binding to this subunit within the mitochondrial matrix and stabilizing it prior to its translocation and insertion into the late CIII dimeric intermediate within the mitochondrial inner membrane. Modulates the mitochondrial matrix zinc pool (By similarity).</text>
</comment>
<comment type="subunit">
    <text evidence="1">Interacts with RIP1.</text>
</comment>
<comment type="subcellular location">
    <subcellularLocation>
        <location evidence="1">Mitochondrion matrix</location>
    </subcellularLocation>
</comment>
<comment type="similarity">
    <text evidence="4">Belongs to the complex I LYR family. MZM1 subfamily.</text>
</comment>
<evidence type="ECO:0000250" key="1"/>
<evidence type="ECO:0000255" key="2"/>
<evidence type="ECO:0000256" key="3">
    <source>
        <dbReference type="SAM" id="MobiDB-lite"/>
    </source>
</evidence>
<evidence type="ECO:0000305" key="4"/>
<dbReference type="EMBL" id="CH476596">
    <property type="protein sequence ID" value="EAU37136.1"/>
    <property type="molecule type" value="Genomic_DNA"/>
</dbReference>
<dbReference type="RefSeq" id="XP_001211352.1">
    <property type="nucleotide sequence ID" value="XM_001211352.1"/>
</dbReference>
<dbReference type="SMR" id="Q0CVW0"/>
<dbReference type="STRING" id="341663.Q0CVW0"/>
<dbReference type="EnsemblFungi" id="EAU37136">
    <property type="protein sequence ID" value="EAU37136"/>
    <property type="gene ID" value="ATEG_02174"/>
</dbReference>
<dbReference type="GeneID" id="4317041"/>
<dbReference type="VEuPathDB" id="FungiDB:ATEG_02174"/>
<dbReference type="eggNOG" id="ENOG502S6EF">
    <property type="taxonomic scope" value="Eukaryota"/>
</dbReference>
<dbReference type="HOGENOM" id="CLU_147114_2_0_1"/>
<dbReference type="OMA" id="KYKLRIH"/>
<dbReference type="OrthoDB" id="529194at2759"/>
<dbReference type="Proteomes" id="UP000007963">
    <property type="component" value="Unassembled WGS sequence"/>
</dbReference>
<dbReference type="GO" id="GO:0005759">
    <property type="term" value="C:mitochondrial matrix"/>
    <property type="evidence" value="ECO:0007669"/>
    <property type="project" value="UniProtKB-SubCell"/>
</dbReference>
<dbReference type="GO" id="GO:0044183">
    <property type="term" value="F:protein folding chaperone"/>
    <property type="evidence" value="ECO:0007669"/>
    <property type="project" value="TreeGrafter"/>
</dbReference>
<dbReference type="GO" id="GO:0034551">
    <property type="term" value="P:mitochondrial respiratory chain complex III assembly"/>
    <property type="evidence" value="ECO:0007669"/>
    <property type="project" value="InterPro"/>
</dbReference>
<dbReference type="CDD" id="cd20267">
    <property type="entry name" value="Complex1_LYR_LYRM7"/>
    <property type="match status" value="1"/>
</dbReference>
<dbReference type="InterPro" id="IPR045298">
    <property type="entry name" value="Complex1_LYR_LYRM7"/>
</dbReference>
<dbReference type="InterPro" id="IPR050435">
    <property type="entry name" value="MZM1/LYRM7"/>
</dbReference>
<dbReference type="PANTHER" id="PTHR46749">
    <property type="entry name" value="COMPLEX III ASSEMBLY FACTOR LYRM7"/>
    <property type="match status" value="1"/>
</dbReference>
<dbReference type="PANTHER" id="PTHR46749:SF1">
    <property type="entry name" value="COMPLEX III ASSEMBLY FACTOR LYRM7"/>
    <property type="match status" value="1"/>
</dbReference>